<organism>
    <name type="scientific">Oncorhynchus mykiss</name>
    <name type="common">Rainbow trout</name>
    <name type="synonym">Salmo gairdneri</name>
    <dbReference type="NCBI Taxonomy" id="8022"/>
    <lineage>
        <taxon>Eukaryota</taxon>
        <taxon>Metazoa</taxon>
        <taxon>Chordata</taxon>
        <taxon>Craniata</taxon>
        <taxon>Vertebrata</taxon>
        <taxon>Euteleostomi</taxon>
        <taxon>Actinopterygii</taxon>
        <taxon>Neopterygii</taxon>
        <taxon>Teleostei</taxon>
        <taxon>Protacanthopterygii</taxon>
        <taxon>Salmoniformes</taxon>
        <taxon>Salmonidae</taxon>
        <taxon>Salmoninae</taxon>
        <taxon>Oncorhynchus</taxon>
    </lineage>
</organism>
<protein>
    <recommendedName>
        <fullName evidence="2">Small ribosomal subunit protein eS30</fullName>
    </recommendedName>
    <alternativeName>
        <fullName>40S ribosomal protein S30</fullName>
    </alternativeName>
</protein>
<feature type="chain" id="PRO_0000174004" description="Small ribosomal subunit protein eS30">
    <location>
        <begin position="1"/>
        <end position="11" status="greater than"/>
    </location>
</feature>
<feature type="non-terminal residue">
    <location>
        <position position="11"/>
    </location>
</feature>
<keyword id="KW-0044">Antibiotic</keyword>
<keyword id="KW-0929">Antimicrobial</keyword>
<keyword id="KW-0903">Direct protein sequencing</keyword>
<keyword id="KW-0687">Ribonucleoprotein</keyword>
<keyword id="KW-0689">Ribosomal protein</keyword>
<sequence>KVHGSLARAGK</sequence>
<evidence type="ECO:0000269" key="1">
    <source>
    </source>
</evidence>
<evidence type="ECO:0000305" key="2"/>
<name>RS30_ONCMY</name>
<proteinExistence type="evidence at protein level"/>
<comment type="function">
    <text evidence="1">Has antibacterial activity against Gram-positive bacteria.</text>
</comment>
<comment type="mass spectrometry"/>
<comment type="similarity">
    <text evidence="2">Belongs to the eukaryotic ribosomal protein eS30 family.</text>
</comment>
<reference key="1">
    <citation type="journal article" date="2002" name="Biochem. Biophys. Res. Commun.">
        <title>A novel antimicrobial function for a ribosomal peptide from rainbow trout skin.</title>
        <authorList>
            <person name="Fernandes J.M.O."/>
            <person name="Smith V.J."/>
        </authorList>
    </citation>
    <scope>PROTEIN SEQUENCE</scope>
    <scope>FUNCTION</scope>
    <scope>MASS SPECTROMETRY</scope>
    <source>
        <tissue>Skin mucus</tissue>
    </source>
</reference>
<gene>
    <name type="primary">fau</name>
</gene>
<accession>P83328</accession>
<dbReference type="Proteomes" id="UP000694395">
    <property type="component" value="Unplaced"/>
</dbReference>
<dbReference type="GO" id="GO:1990904">
    <property type="term" value="C:ribonucleoprotein complex"/>
    <property type="evidence" value="ECO:0007669"/>
    <property type="project" value="UniProtKB-KW"/>
</dbReference>
<dbReference type="GO" id="GO:0005840">
    <property type="term" value="C:ribosome"/>
    <property type="evidence" value="ECO:0007669"/>
    <property type="project" value="UniProtKB-KW"/>
</dbReference>
<dbReference type="GO" id="GO:0050830">
    <property type="term" value="P:defense response to Gram-positive bacterium"/>
    <property type="evidence" value="ECO:0000314"/>
    <property type="project" value="AgBase"/>
</dbReference>